<comment type="function">
    <text>This protein promotes the GTP-dependent binding of aminoacyl-tRNA to the A-site of ribosomes during protein biosynthesis.</text>
</comment>
<comment type="subcellular location">
    <subcellularLocation>
        <location>Cytoplasm</location>
    </subcellularLocation>
</comment>
<comment type="similarity">
    <text evidence="3">Belongs to the TRAFAC class translation factor GTPase superfamily. Classic translation factor GTPase family. EF-Tu/EF-1A subfamily.</text>
</comment>
<name>EF1A_HYPJE</name>
<dbReference type="EMBL" id="Z23012">
    <property type="protein sequence ID" value="CAA80554.1"/>
    <property type="molecule type" value="Genomic_DNA"/>
</dbReference>
<dbReference type="PIR" id="S35772">
    <property type="entry name" value="S35772"/>
</dbReference>
<dbReference type="SMR" id="P34825"/>
<dbReference type="GO" id="GO:0005737">
    <property type="term" value="C:cytoplasm"/>
    <property type="evidence" value="ECO:0007669"/>
    <property type="project" value="UniProtKB-SubCell"/>
</dbReference>
<dbReference type="GO" id="GO:0005525">
    <property type="term" value="F:GTP binding"/>
    <property type="evidence" value="ECO:0007669"/>
    <property type="project" value="UniProtKB-KW"/>
</dbReference>
<dbReference type="GO" id="GO:0003924">
    <property type="term" value="F:GTPase activity"/>
    <property type="evidence" value="ECO:0007669"/>
    <property type="project" value="InterPro"/>
</dbReference>
<dbReference type="GO" id="GO:0003746">
    <property type="term" value="F:translation elongation factor activity"/>
    <property type="evidence" value="ECO:0007669"/>
    <property type="project" value="UniProtKB-KW"/>
</dbReference>
<dbReference type="CDD" id="cd01883">
    <property type="entry name" value="EF1_alpha"/>
    <property type="match status" value="1"/>
</dbReference>
<dbReference type="CDD" id="cd03693">
    <property type="entry name" value="EF1_alpha_II"/>
    <property type="match status" value="1"/>
</dbReference>
<dbReference type="CDD" id="cd03705">
    <property type="entry name" value="EF1_alpha_III"/>
    <property type="match status" value="1"/>
</dbReference>
<dbReference type="FunFam" id="2.40.30.10:FF:000003">
    <property type="entry name" value="Elongation factor 1-alpha"/>
    <property type="match status" value="1"/>
</dbReference>
<dbReference type="FunFam" id="2.40.30.10:FF:000005">
    <property type="entry name" value="Elongation factor 1-alpha"/>
    <property type="match status" value="1"/>
</dbReference>
<dbReference type="FunFam" id="3.40.50.300:FF:000211">
    <property type="entry name" value="Elongation factor 1-alpha"/>
    <property type="match status" value="1"/>
</dbReference>
<dbReference type="Gene3D" id="3.40.50.300">
    <property type="entry name" value="P-loop containing nucleotide triphosphate hydrolases"/>
    <property type="match status" value="1"/>
</dbReference>
<dbReference type="Gene3D" id="2.40.30.10">
    <property type="entry name" value="Translation factors"/>
    <property type="match status" value="2"/>
</dbReference>
<dbReference type="HAMAP" id="MF_00118_A">
    <property type="entry name" value="EF_Tu_A"/>
    <property type="match status" value="1"/>
</dbReference>
<dbReference type="InterPro" id="IPR004161">
    <property type="entry name" value="EFTu-like_2"/>
</dbReference>
<dbReference type="InterPro" id="IPR031157">
    <property type="entry name" value="G_TR_CS"/>
</dbReference>
<dbReference type="InterPro" id="IPR054696">
    <property type="entry name" value="GTP-eEF1A_C"/>
</dbReference>
<dbReference type="InterPro" id="IPR027417">
    <property type="entry name" value="P-loop_NTPase"/>
</dbReference>
<dbReference type="InterPro" id="IPR000795">
    <property type="entry name" value="T_Tr_GTP-bd_dom"/>
</dbReference>
<dbReference type="InterPro" id="IPR050100">
    <property type="entry name" value="TRAFAC_GTPase_members"/>
</dbReference>
<dbReference type="InterPro" id="IPR009000">
    <property type="entry name" value="Transl_B-barrel_sf"/>
</dbReference>
<dbReference type="InterPro" id="IPR009001">
    <property type="entry name" value="Transl_elong_EF1A/Init_IF2_C"/>
</dbReference>
<dbReference type="InterPro" id="IPR004539">
    <property type="entry name" value="Transl_elong_EF1A_euk/arc"/>
</dbReference>
<dbReference type="NCBIfam" id="TIGR00483">
    <property type="entry name" value="EF-1_alpha"/>
    <property type="match status" value="1"/>
</dbReference>
<dbReference type="NCBIfam" id="NF008969">
    <property type="entry name" value="PRK12317.1"/>
    <property type="match status" value="1"/>
</dbReference>
<dbReference type="PANTHER" id="PTHR23115">
    <property type="entry name" value="TRANSLATION FACTOR"/>
    <property type="match status" value="1"/>
</dbReference>
<dbReference type="Pfam" id="PF22594">
    <property type="entry name" value="GTP-eEF1A_C"/>
    <property type="match status" value="1"/>
</dbReference>
<dbReference type="Pfam" id="PF00009">
    <property type="entry name" value="GTP_EFTU"/>
    <property type="match status" value="1"/>
</dbReference>
<dbReference type="Pfam" id="PF03144">
    <property type="entry name" value="GTP_EFTU_D2"/>
    <property type="match status" value="1"/>
</dbReference>
<dbReference type="PRINTS" id="PR00315">
    <property type="entry name" value="ELONGATNFCT"/>
</dbReference>
<dbReference type="SUPFAM" id="SSF50465">
    <property type="entry name" value="EF-Tu/eEF-1alpha/eIF2-gamma C-terminal domain"/>
    <property type="match status" value="1"/>
</dbReference>
<dbReference type="SUPFAM" id="SSF52540">
    <property type="entry name" value="P-loop containing nucleoside triphosphate hydrolases"/>
    <property type="match status" value="1"/>
</dbReference>
<dbReference type="SUPFAM" id="SSF50447">
    <property type="entry name" value="Translation proteins"/>
    <property type="match status" value="1"/>
</dbReference>
<dbReference type="PROSITE" id="PS00301">
    <property type="entry name" value="G_TR_1"/>
    <property type="match status" value="1"/>
</dbReference>
<dbReference type="PROSITE" id="PS51722">
    <property type="entry name" value="G_TR_2"/>
    <property type="match status" value="1"/>
</dbReference>
<proteinExistence type="inferred from homology"/>
<feature type="initiator methionine" description="Removed" evidence="2">
    <location>
        <position position="1"/>
    </location>
</feature>
<feature type="chain" id="PRO_0000090971" description="Elongation factor 1-alpha">
    <location>
        <begin position="2"/>
        <end position="460"/>
    </location>
</feature>
<feature type="domain" description="tr-type G">
    <location>
        <begin position="6"/>
        <end position="241"/>
    </location>
</feature>
<feature type="region of interest" description="G1" evidence="1">
    <location>
        <begin position="15"/>
        <end position="22"/>
    </location>
</feature>
<feature type="region of interest" description="G2" evidence="1">
    <location>
        <begin position="71"/>
        <end position="75"/>
    </location>
</feature>
<feature type="region of interest" description="G3" evidence="1">
    <location>
        <begin position="92"/>
        <end position="95"/>
    </location>
</feature>
<feature type="region of interest" description="G4" evidence="1">
    <location>
        <begin position="154"/>
        <end position="157"/>
    </location>
</feature>
<feature type="region of interest" description="G5" evidence="1">
    <location>
        <begin position="193"/>
        <end position="195"/>
    </location>
</feature>
<feature type="binding site" evidence="1">
    <location>
        <begin position="15"/>
        <end position="22"/>
    </location>
    <ligand>
        <name>GTP</name>
        <dbReference type="ChEBI" id="CHEBI:37565"/>
    </ligand>
</feature>
<feature type="binding site" evidence="1">
    <location>
        <begin position="92"/>
        <end position="96"/>
    </location>
    <ligand>
        <name>GTP</name>
        <dbReference type="ChEBI" id="CHEBI:37565"/>
    </ligand>
</feature>
<feature type="binding site" evidence="1">
    <location>
        <begin position="154"/>
        <end position="157"/>
    </location>
    <ligand>
        <name>GTP</name>
        <dbReference type="ChEBI" id="CHEBI:37565"/>
    </ligand>
</feature>
<feature type="modified residue" description="N,N,N-trimethylglycine" evidence="2">
    <location>
        <position position="2"/>
    </location>
</feature>
<feature type="modified residue" description="N6,N6-dimethyllysine; alternate" evidence="2">
    <location>
        <position position="3"/>
    </location>
</feature>
<feature type="modified residue" description="N6-methyllysine; alternate" evidence="2">
    <location>
        <position position="3"/>
    </location>
</feature>
<feature type="modified residue" description="N6,N6,N6-trimethyllysine" evidence="2">
    <location>
        <position position="80"/>
    </location>
</feature>
<feature type="modified residue" description="N6,N6-dimethyllysine; alternate" evidence="2">
    <location>
        <position position="317"/>
    </location>
</feature>
<feature type="modified residue" description="N6-methyllysine; alternate" evidence="2">
    <location>
        <position position="317"/>
    </location>
</feature>
<feature type="modified residue" description="N6-methyllysine" evidence="2">
    <location>
        <position position="391"/>
    </location>
</feature>
<sequence>MGKEDKTHINVVVIGHVDSGKSTTTGHLIYQCGGIDKRTIEKFEKEAAELGKGSFKYAWVLDKLKAERERGITIDIALWKFETPKYYVTVIDAPGHRDFIKNMITGTSQADCAILIIAAGTGEFEAGISKDGQTREHALLAYTLGVKQLIVAINKMDTANWAEARYQEIIKETSNFIKKVGFNPKAVAFVPISGFNGDNMLTPSTNCPWYKGWEKETKAGKFTGKTLLEAIDSIEPPKRPTDKPLRLPLQDVYKIGGIGTVPVGRIETGVLKPGMVVTFAPSNVTTEVKSVEMHHEQLAEGQPGDNVGFNVKNVSVKEIRRGNVAGDSKNDPPMGAASFTAQVIVMNHPGQVGAGYAPVLDCHTAHIACKFAELLEKIDRRTGKATESAPKFIKSGDSAIVKMIPSKPMCVEAFTDYPPLGRFAVRDMRQTVAVGVIKAVEKSSAAAAKVTKSAAKAAKK</sequence>
<accession>P34825</accession>
<evidence type="ECO:0000250" key="1"/>
<evidence type="ECO:0000250" key="2">
    <source>
        <dbReference type="UniProtKB" id="P02994"/>
    </source>
</evidence>
<evidence type="ECO:0000305" key="3"/>
<reference key="1">
    <citation type="journal article" date="1993" name="Gene">
        <title>Isolation of Trichoderma reesei genes highly expressed on glucose-containing media: characterization of the tef1 gene encoding translation elongation factor 1 alpha.</title>
        <authorList>
            <person name="Nakari T."/>
            <person name="Alatalo E."/>
            <person name="Penttilae M."/>
        </authorList>
    </citation>
    <scope>NUCLEOTIDE SEQUENCE [GENOMIC DNA]</scope>
    <source>
        <strain>ATCC 26921 / CBS 392.92 / QM9414</strain>
    </source>
</reference>
<organism>
    <name type="scientific">Hypocrea jecorina</name>
    <name type="common">Trichoderma reesei</name>
    <dbReference type="NCBI Taxonomy" id="51453"/>
    <lineage>
        <taxon>Eukaryota</taxon>
        <taxon>Fungi</taxon>
        <taxon>Dikarya</taxon>
        <taxon>Ascomycota</taxon>
        <taxon>Pezizomycotina</taxon>
        <taxon>Sordariomycetes</taxon>
        <taxon>Hypocreomycetidae</taxon>
        <taxon>Hypocreales</taxon>
        <taxon>Hypocreaceae</taxon>
        <taxon>Trichoderma</taxon>
    </lineage>
</organism>
<keyword id="KW-0963">Cytoplasm</keyword>
<keyword id="KW-0251">Elongation factor</keyword>
<keyword id="KW-0342">GTP-binding</keyword>
<keyword id="KW-0488">Methylation</keyword>
<keyword id="KW-0547">Nucleotide-binding</keyword>
<keyword id="KW-0648">Protein biosynthesis</keyword>
<protein>
    <recommendedName>
        <fullName>Elongation factor 1-alpha</fullName>
        <shortName>EF-1-alpha</shortName>
    </recommendedName>
</protein>
<gene>
    <name type="primary">tef1</name>
</gene>